<feature type="chain" id="PRO_0000057343" description="tRNA pseudouridine synthase A">
    <location>
        <begin position="1"/>
        <end position="270"/>
    </location>
</feature>
<feature type="active site" description="Nucleophile" evidence="1">
    <location>
        <position position="54"/>
    </location>
</feature>
<feature type="binding site" evidence="1">
    <location>
        <position position="112"/>
    </location>
    <ligand>
        <name>substrate</name>
    </ligand>
</feature>
<name>TRUA_BORPA</name>
<comment type="function">
    <text evidence="1">Formation of pseudouridine at positions 38, 39 and 40 in the anticodon stem and loop of transfer RNAs.</text>
</comment>
<comment type="catalytic activity">
    <reaction evidence="1">
        <text>uridine(38/39/40) in tRNA = pseudouridine(38/39/40) in tRNA</text>
        <dbReference type="Rhea" id="RHEA:22376"/>
        <dbReference type="Rhea" id="RHEA-COMP:10085"/>
        <dbReference type="Rhea" id="RHEA-COMP:10087"/>
        <dbReference type="ChEBI" id="CHEBI:65314"/>
        <dbReference type="ChEBI" id="CHEBI:65315"/>
        <dbReference type="EC" id="5.4.99.12"/>
    </reaction>
</comment>
<comment type="subunit">
    <text evidence="1">Homodimer.</text>
</comment>
<comment type="similarity">
    <text evidence="1">Belongs to the tRNA pseudouridine synthase TruA family.</text>
</comment>
<sequence>MSRIALGLAYDGSAWQGWQTQPHGVTVQDQVEAALASFAGGGGPVATVCAGRTDTGVHAAMQVIHLDTDLQRRDESWVRGVNAFLPPSIVVQWARPVSEAFHARFSARSRTYVYLLWRGRVRPALWAGRAGWAFQPLDVPAMRAAARTLLGEHDFSSFRSSQCQARHPVRTLHRLDIDERGAFLVFTLRANAFLHHMVRNLIGALLQVGQGRESVAWMDALLRARDRRLGAPTFMPDGLYLSAIEYPAEFGFDELDGGTMLLSPFTGALG</sequence>
<gene>
    <name evidence="1" type="primary">truA</name>
    <name type="ordered locus">BPP1947</name>
</gene>
<protein>
    <recommendedName>
        <fullName evidence="1">tRNA pseudouridine synthase A</fullName>
        <ecNumber evidence="1">5.4.99.12</ecNumber>
    </recommendedName>
    <alternativeName>
        <fullName evidence="1">tRNA pseudouridine(38-40) synthase</fullName>
    </alternativeName>
    <alternativeName>
        <fullName evidence="1">tRNA pseudouridylate synthase I</fullName>
    </alternativeName>
    <alternativeName>
        <fullName evidence="1">tRNA-uridine isomerase I</fullName>
    </alternativeName>
</protein>
<keyword id="KW-0413">Isomerase</keyword>
<keyword id="KW-0819">tRNA processing</keyword>
<evidence type="ECO:0000255" key="1">
    <source>
        <dbReference type="HAMAP-Rule" id="MF_00171"/>
    </source>
</evidence>
<dbReference type="EC" id="5.4.99.12" evidence="1"/>
<dbReference type="EMBL" id="BX640428">
    <property type="protein sequence ID" value="CAE37247.1"/>
    <property type="molecule type" value="Genomic_DNA"/>
</dbReference>
<dbReference type="RefSeq" id="WP_003812640.1">
    <property type="nucleotide sequence ID" value="NC_002928.3"/>
</dbReference>
<dbReference type="SMR" id="Q7U376"/>
<dbReference type="GeneID" id="93203719"/>
<dbReference type="KEGG" id="bpa:BPP1947"/>
<dbReference type="HOGENOM" id="CLU_014673_0_2_4"/>
<dbReference type="Proteomes" id="UP000001421">
    <property type="component" value="Chromosome"/>
</dbReference>
<dbReference type="GO" id="GO:0003723">
    <property type="term" value="F:RNA binding"/>
    <property type="evidence" value="ECO:0007669"/>
    <property type="project" value="InterPro"/>
</dbReference>
<dbReference type="GO" id="GO:0160147">
    <property type="term" value="F:tRNA pseudouridine(38-40) synthase activity"/>
    <property type="evidence" value="ECO:0007669"/>
    <property type="project" value="UniProtKB-EC"/>
</dbReference>
<dbReference type="GO" id="GO:0031119">
    <property type="term" value="P:tRNA pseudouridine synthesis"/>
    <property type="evidence" value="ECO:0007669"/>
    <property type="project" value="UniProtKB-UniRule"/>
</dbReference>
<dbReference type="CDD" id="cd02570">
    <property type="entry name" value="PseudoU_synth_EcTruA"/>
    <property type="match status" value="1"/>
</dbReference>
<dbReference type="FunFam" id="3.30.70.580:FF:000001">
    <property type="entry name" value="tRNA pseudouridine synthase A"/>
    <property type="match status" value="1"/>
</dbReference>
<dbReference type="Gene3D" id="3.30.70.660">
    <property type="entry name" value="Pseudouridine synthase I, catalytic domain, C-terminal subdomain"/>
    <property type="match status" value="1"/>
</dbReference>
<dbReference type="Gene3D" id="3.30.70.580">
    <property type="entry name" value="Pseudouridine synthase I, catalytic domain, N-terminal subdomain"/>
    <property type="match status" value="1"/>
</dbReference>
<dbReference type="HAMAP" id="MF_00171">
    <property type="entry name" value="TruA"/>
    <property type="match status" value="1"/>
</dbReference>
<dbReference type="InterPro" id="IPR020103">
    <property type="entry name" value="PsdUridine_synth_cat_dom_sf"/>
</dbReference>
<dbReference type="InterPro" id="IPR001406">
    <property type="entry name" value="PsdUridine_synth_TruA"/>
</dbReference>
<dbReference type="InterPro" id="IPR020097">
    <property type="entry name" value="PsdUridine_synth_TruA_a/b_dom"/>
</dbReference>
<dbReference type="InterPro" id="IPR020095">
    <property type="entry name" value="PsdUridine_synth_TruA_C"/>
</dbReference>
<dbReference type="InterPro" id="IPR020094">
    <property type="entry name" value="TruA/RsuA/RluB/E/F_N"/>
</dbReference>
<dbReference type="NCBIfam" id="TIGR00071">
    <property type="entry name" value="hisT_truA"/>
    <property type="match status" value="1"/>
</dbReference>
<dbReference type="PANTHER" id="PTHR11142">
    <property type="entry name" value="PSEUDOURIDYLATE SYNTHASE"/>
    <property type="match status" value="1"/>
</dbReference>
<dbReference type="PANTHER" id="PTHR11142:SF0">
    <property type="entry name" value="TRNA PSEUDOURIDINE SYNTHASE-LIKE 1"/>
    <property type="match status" value="1"/>
</dbReference>
<dbReference type="Pfam" id="PF01416">
    <property type="entry name" value="PseudoU_synth_1"/>
    <property type="match status" value="2"/>
</dbReference>
<dbReference type="PIRSF" id="PIRSF001430">
    <property type="entry name" value="tRNA_psdUrid_synth"/>
    <property type="match status" value="1"/>
</dbReference>
<dbReference type="SUPFAM" id="SSF55120">
    <property type="entry name" value="Pseudouridine synthase"/>
    <property type="match status" value="1"/>
</dbReference>
<accession>Q7U376</accession>
<proteinExistence type="inferred from homology"/>
<reference key="1">
    <citation type="journal article" date="2003" name="Nat. Genet.">
        <title>Comparative analysis of the genome sequences of Bordetella pertussis, Bordetella parapertussis and Bordetella bronchiseptica.</title>
        <authorList>
            <person name="Parkhill J."/>
            <person name="Sebaihia M."/>
            <person name="Preston A."/>
            <person name="Murphy L.D."/>
            <person name="Thomson N.R."/>
            <person name="Harris D.E."/>
            <person name="Holden M.T.G."/>
            <person name="Churcher C.M."/>
            <person name="Bentley S.D."/>
            <person name="Mungall K.L."/>
            <person name="Cerdeno-Tarraga A.-M."/>
            <person name="Temple L."/>
            <person name="James K.D."/>
            <person name="Harris B."/>
            <person name="Quail M.A."/>
            <person name="Achtman M."/>
            <person name="Atkin R."/>
            <person name="Baker S."/>
            <person name="Basham D."/>
            <person name="Bason N."/>
            <person name="Cherevach I."/>
            <person name="Chillingworth T."/>
            <person name="Collins M."/>
            <person name="Cronin A."/>
            <person name="Davis P."/>
            <person name="Doggett J."/>
            <person name="Feltwell T."/>
            <person name="Goble A."/>
            <person name="Hamlin N."/>
            <person name="Hauser H."/>
            <person name="Holroyd S."/>
            <person name="Jagels K."/>
            <person name="Leather S."/>
            <person name="Moule S."/>
            <person name="Norberczak H."/>
            <person name="O'Neil S."/>
            <person name="Ormond D."/>
            <person name="Price C."/>
            <person name="Rabbinowitsch E."/>
            <person name="Rutter S."/>
            <person name="Sanders M."/>
            <person name="Saunders D."/>
            <person name="Seeger K."/>
            <person name="Sharp S."/>
            <person name="Simmonds M."/>
            <person name="Skelton J."/>
            <person name="Squares R."/>
            <person name="Squares S."/>
            <person name="Stevens K."/>
            <person name="Unwin L."/>
            <person name="Whitehead S."/>
            <person name="Barrell B.G."/>
            <person name="Maskell D.J."/>
        </authorList>
    </citation>
    <scope>NUCLEOTIDE SEQUENCE [LARGE SCALE GENOMIC DNA]</scope>
    <source>
        <strain>12822 / ATCC BAA-587 / NCTC 13253</strain>
    </source>
</reference>
<organism>
    <name type="scientific">Bordetella parapertussis (strain 12822 / ATCC BAA-587 / NCTC 13253)</name>
    <dbReference type="NCBI Taxonomy" id="257311"/>
    <lineage>
        <taxon>Bacteria</taxon>
        <taxon>Pseudomonadati</taxon>
        <taxon>Pseudomonadota</taxon>
        <taxon>Betaproteobacteria</taxon>
        <taxon>Burkholderiales</taxon>
        <taxon>Alcaligenaceae</taxon>
        <taxon>Bordetella</taxon>
    </lineage>
</organism>